<reference key="1">
    <citation type="journal article" date="2005" name="Genome Res.">
        <title>Comparative genome sequencing of Drosophila pseudoobscura: chromosomal, gene, and cis-element evolution.</title>
        <authorList>
            <person name="Richards S."/>
            <person name="Liu Y."/>
            <person name="Bettencourt B.R."/>
            <person name="Hradecky P."/>
            <person name="Letovsky S."/>
            <person name="Nielsen R."/>
            <person name="Thornton K."/>
            <person name="Hubisz M.J."/>
            <person name="Chen R."/>
            <person name="Meisel R.P."/>
            <person name="Couronne O."/>
            <person name="Hua S."/>
            <person name="Smith M.A."/>
            <person name="Zhang P."/>
            <person name="Liu J."/>
            <person name="Bussemaker H.J."/>
            <person name="van Batenburg M.F."/>
            <person name="Howells S.L."/>
            <person name="Scherer S.E."/>
            <person name="Sodergren E."/>
            <person name="Matthews B.B."/>
            <person name="Crosby M.A."/>
            <person name="Schroeder A.J."/>
            <person name="Ortiz-Barrientos D."/>
            <person name="Rives C.M."/>
            <person name="Metzker M.L."/>
            <person name="Muzny D.M."/>
            <person name="Scott G."/>
            <person name="Steffen D."/>
            <person name="Wheeler D.A."/>
            <person name="Worley K.C."/>
            <person name="Havlak P."/>
            <person name="Durbin K.J."/>
            <person name="Egan A."/>
            <person name="Gill R."/>
            <person name="Hume J."/>
            <person name="Morgan M.B."/>
            <person name="Miner G."/>
            <person name="Hamilton C."/>
            <person name="Huang Y."/>
            <person name="Waldron L."/>
            <person name="Verduzco D."/>
            <person name="Clerc-Blankenburg K.P."/>
            <person name="Dubchak I."/>
            <person name="Noor M.A.F."/>
            <person name="Anderson W."/>
            <person name="White K.P."/>
            <person name="Clark A.G."/>
            <person name="Schaeffer S.W."/>
            <person name="Gelbart W.M."/>
            <person name="Weinstock G.M."/>
            <person name="Gibbs R.A."/>
        </authorList>
    </citation>
    <scope>NUCLEOTIDE SEQUENCE [LARGE SCALE GENOMIC DNA]</scope>
    <source>
        <strain>MV2-25 / Tucson 14011-0121.94</strain>
    </source>
</reference>
<name>EIF3H_DROPS</name>
<comment type="function">
    <text evidence="2">Component of the eukaryotic translation initiation factor 3 (eIF-3) complex, which is involved in protein synthesis of a specialized repertoire of mRNAs and, together with other initiation factors, stimulates binding of mRNA and methionyl-tRNAi to the 40S ribosome. The eIF-3 complex specifically targets and initiates translation of a subset of mRNAs involved in cell proliferation.</text>
</comment>
<comment type="subunit">
    <text evidence="1 2">Component of the eukaryotic translation initiation factor 3 (eIF-3) complex. The eIF-3 complex interacts with pix. Interacts with mxt (By similarity).</text>
</comment>
<comment type="subcellular location">
    <subcellularLocation>
        <location evidence="2">Cytoplasm</location>
    </subcellularLocation>
</comment>
<comment type="similarity">
    <text evidence="2">Belongs to the eIF-3 subunit H family.</text>
</comment>
<accession>B5DJJ2</accession>
<proteinExistence type="inferred from homology"/>
<protein>
    <recommendedName>
        <fullName evidence="2">Eukaryotic translation initiation factor 3 subunit H</fullName>
        <shortName evidence="2">eIF3h</shortName>
    </recommendedName>
    <alternativeName>
        <fullName evidence="2">Eukaryotic translation initiation factor 3 subunit 3</fullName>
    </alternativeName>
</protein>
<feature type="chain" id="PRO_0000365190" description="Eukaryotic translation initiation factor 3 subunit H">
    <location>
        <begin position="1"/>
        <end position="337"/>
    </location>
</feature>
<feature type="domain" description="MPN" evidence="3">
    <location>
        <begin position="21"/>
        <end position="153"/>
    </location>
</feature>
<evidence type="ECO:0000250" key="1">
    <source>
        <dbReference type="UniProtKB" id="Q9U9Q4"/>
    </source>
</evidence>
<evidence type="ECO:0000255" key="2">
    <source>
        <dbReference type="HAMAP-Rule" id="MF_03007"/>
    </source>
</evidence>
<evidence type="ECO:0000255" key="3">
    <source>
        <dbReference type="PROSITE-ProRule" id="PRU01182"/>
    </source>
</evidence>
<organism>
    <name type="scientific">Drosophila pseudoobscura pseudoobscura</name>
    <name type="common">Fruit fly</name>
    <dbReference type="NCBI Taxonomy" id="46245"/>
    <lineage>
        <taxon>Eukaryota</taxon>
        <taxon>Metazoa</taxon>
        <taxon>Ecdysozoa</taxon>
        <taxon>Arthropoda</taxon>
        <taxon>Hexapoda</taxon>
        <taxon>Insecta</taxon>
        <taxon>Pterygota</taxon>
        <taxon>Neoptera</taxon>
        <taxon>Endopterygota</taxon>
        <taxon>Diptera</taxon>
        <taxon>Brachycera</taxon>
        <taxon>Muscomorpha</taxon>
        <taxon>Ephydroidea</taxon>
        <taxon>Drosophilidae</taxon>
        <taxon>Drosophila</taxon>
        <taxon>Sophophora</taxon>
    </lineage>
</organism>
<sequence length="337" mass="38132">MANRGGRHARTEDSDNTINYVQCDGLAVMKMVKHCHEESSNMDLAQGALLGLVVDKCLEITNCFPFPKSGDETMDEEMYQLTVMRRLRRVNVDHLHVGWYQSSDVGNSLSLALLESQYHYQTSIEESVVVVYDTQKSARGFLCLKAYRLTPQAIQMYKDGDFTPEAFRTLKVGYESLFAEIPIVIKNSPLTNIMMSELNELLPEDKGHNFLDLGTASVLENHMRSLIERVDELYQEAVRYNKYQQVVFKQDSDKNRALAKLAAENAVRTSKGEPTVAEEEVIKQFRPMPVPARLTATITSGQINTHSQHIAQFCSQSLAKLFITESLQNAKEAKEIK</sequence>
<dbReference type="EMBL" id="CH379061">
    <property type="protein sequence ID" value="EDY70464.1"/>
    <property type="molecule type" value="Genomic_DNA"/>
</dbReference>
<dbReference type="SMR" id="B5DJJ2"/>
<dbReference type="FunCoup" id="B5DJJ2">
    <property type="interactions" value="2346"/>
</dbReference>
<dbReference type="STRING" id="46245.B5DJJ2"/>
<dbReference type="MEROPS" id="M67.971"/>
<dbReference type="EnsemblMetazoa" id="FBtr0289128">
    <property type="protein sequence ID" value="FBpp0287566"/>
    <property type="gene ID" value="FBgn0250237"/>
</dbReference>
<dbReference type="GeneID" id="6902520"/>
<dbReference type="KEGG" id="dpo:6902520"/>
<dbReference type="CTD" id="8667"/>
<dbReference type="eggNOG" id="KOG1560">
    <property type="taxonomic scope" value="Eukaryota"/>
</dbReference>
<dbReference type="HOGENOM" id="CLU_044094_0_0_1"/>
<dbReference type="InParanoid" id="B5DJJ2"/>
<dbReference type="OMA" id="WYQSTYF"/>
<dbReference type="ChiTaRS" id="eIF-3p40">
    <property type="organism name" value="fly"/>
</dbReference>
<dbReference type="Proteomes" id="UP000001819">
    <property type="component" value="Chromosome 4"/>
</dbReference>
<dbReference type="Bgee" id="FBgn0250237">
    <property type="expression patterns" value="Expressed in female reproductive system and 2 other cell types or tissues"/>
</dbReference>
<dbReference type="GO" id="GO:0016282">
    <property type="term" value="C:eukaryotic 43S preinitiation complex"/>
    <property type="evidence" value="ECO:0007669"/>
    <property type="project" value="UniProtKB-UniRule"/>
</dbReference>
<dbReference type="GO" id="GO:0033290">
    <property type="term" value="C:eukaryotic 48S preinitiation complex"/>
    <property type="evidence" value="ECO:0007669"/>
    <property type="project" value="UniProtKB-UniRule"/>
</dbReference>
<dbReference type="GO" id="GO:0005852">
    <property type="term" value="C:eukaryotic translation initiation factor 3 complex"/>
    <property type="evidence" value="ECO:0007669"/>
    <property type="project" value="UniProtKB-UniRule"/>
</dbReference>
<dbReference type="GO" id="GO:0008237">
    <property type="term" value="F:metallopeptidase activity"/>
    <property type="evidence" value="ECO:0007669"/>
    <property type="project" value="InterPro"/>
</dbReference>
<dbReference type="GO" id="GO:0003743">
    <property type="term" value="F:translation initiation factor activity"/>
    <property type="evidence" value="ECO:0007669"/>
    <property type="project" value="UniProtKB-UniRule"/>
</dbReference>
<dbReference type="GO" id="GO:0001732">
    <property type="term" value="P:formation of cytoplasmic translation initiation complex"/>
    <property type="evidence" value="ECO:0007669"/>
    <property type="project" value="UniProtKB-UniRule"/>
</dbReference>
<dbReference type="CDD" id="cd08065">
    <property type="entry name" value="MPN_eIF3h"/>
    <property type="match status" value="1"/>
</dbReference>
<dbReference type="FunFam" id="3.40.140.10:FF:000045">
    <property type="entry name" value="Eukaryotic translation initiation factor 3 subunit H"/>
    <property type="match status" value="1"/>
</dbReference>
<dbReference type="Gene3D" id="3.40.140.10">
    <property type="entry name" value="Cytidine Deaminase, domain 2"/>
    <property type="match status" value="1"/>
</dbReference>
<dbReference type="HAMAP" id="MF_03007">
    <property type="entry name" value="eIF3h"/>
    <property type="match status" value="1"/>
</dbReference>
<dbReference type="InterPro" id="IPR027524">
    <property type="entry name" value="eIF3h"/>
</dbReference>
<dbReference type="InterPro" id="IPR045810">
    <property type="entry name" value="eIF3h_C"/>
</dbReference>
<dbReference type="InterPro" id="IPR000555">
    <property type="entry name" value="JAMM/MPN+_dom"/>
</dbReference>
<dbReference type="InterPro" id="IPR050242">
    <property type="entry name" value="JAMM_MPN+_peptidase_M67A"/>
</dbReference>
<dbReference type="InterPro" id="IPR037518">
    <property type="entry name" value="MPN"/>
</dbReference>
<dbReference type="PANTHER" id="PTHR10410">
    <property type="entry name" value="EUKARYOTIC TRANSLATION INITIATION FACTOR 3 -RELATED"/>
    <property type="match status" value="1"/>
</dbReference>
<dbReference type="Pfam" id="PF19445">
    <property type="entry name" value="eIF3h_C"/>
    <property type="match status" value="1"/>
</dbReference>
<dbReference type="Pfam" id="PF01398">
    <property type="entry name" value="JAB"/>
    <property type="match status" value="1"/>
</dbReference>
<dbReference type="SMART" id="SM00232">
    <property type="entry name" value="JAB_MPN"/>
    <property type="match status" value="1"/>
</dbReference>
<dbReference type="PROSITE" id="PS50249">
    <property type="entry name" value="MPN"/>
    <property type="match status" value="1"/>
</dbReference>
<keyword id="KW-0963">Cytoplasm</keyword>
<keyword id="KW-0396">Initiation factor</keyword>
<keyword id="KW-0648">Protein biosynthesis</keyword>
<keyword id="KW-1185">Reference proteome</keyword>
<gene>
    <name evidence="2" type="primary">eIF-3p40</name>
    <name evidence="2" type="synonym">eif3-S3</name>
    <name type="ORF">GA28878</name>
</gene>